<proteinExistence type="inferred from homology"/>
<sequence length="721" mass="79281">MPDLLIELRSEEIPARMQRKAAGDLKKLVTDALVEAGLTYEGAREYWTPRRLTLDIRGLNARSADVREERKGPRTDANEKAIEGFLRAAGLSSIGDAHVHSDPKKGDFYVAHIVKPGRDAEDIVAEVMPAIIRDFPWPKSMRSGAASAKPGSLRWVRPLQSIVCTFGAETEETRVIPFAVDGITASNITYGHRFHAPEAIMVRRFADYADKLEKAKVVLDAERRKEIIGADARNIAFANGLELVEDEGLLEEVTGLVEWPRVLMGSFEESYLEIPSEIIRLTIKTNQKCFVTRQPGAETLSNRFILVSNIEAKDGGKEIVHGNGKVVRARLSDAAHFWKRDQGDLPDLETLKPSAEKFGLDLGKPLDQRMAKLDALNVTFHAKLGTQGERVARIRSIALALAEVTGADQALVERSVVLAKADLRTEAVGEFPELQGIMGHKYAVLQGEDAAVANAIEDHYKPQGPSDRVPTDAVSAAVALADKLDTLAGFWAIDEKPTGSKDPYALRRAALGVIRLILEGRTRLPLLPFFDVALKALRTQRPDLTGDIAADLLAFFHDRLKVYLRDLGARYDLIDAVLTSEADDLLMIARRVEALTAFITAEEGKNLLAGTKRATQILAAEEKKGTEVADQVDERLFRLDAERTLHASIKLASDDAREAIGKEDFRSAMAALSKLREPVDVFFNDVLVNDEDRAIRANRLALLGLIRSATGEVADFSKISG</sequence>
<keyword id="KW-0030">Aminoacyl-tRNA synthetase</keyword>
<keyword id="KW-0067">ATP-binding</keyword>
<keyword id="KW-0963">Cytoplasm</keyword>
<keyword id="KW-0436">Ligase</keyword>
<keyword id="KW-0547">Nucleotide-binding</keyword>
<keyword id="KW-0648">Protein biosynthesis</keyword>
<keyword id="KW-1185">Reference proteome</keyword>
<comment type="catalytic activity">
    <reaction evidence="1">
        <text>tRNA(Gly) + glycine + ATP = glycyl-tRNA(Gly) + AMP + diphosphate</text>
        <dbReference type="Rhea" id="RHEA:16013"/>
        <dbReference type="Rhea" id="RHEA-COMP:9664"/>
        <dbReference type="Rhea" id="RHEA-COMP:9683"/>
        <dbReference type="ChEBI" id="CHEBI:30616"/>
        <dbReference type="ChEBI" id="CHEBI:33019"/>
        <dbReference type="ChEBI" id="CHEBI:57305"/>
        <dbReference type="ChEBI" id="CHEBI:78442"/>
        <dbReference type="ChEBI" id="CHEBI:78522"/>
        <dbReference type="ChEBI" id="CHEBI:456215"/>
        <dbReference type="EC" id="6.1.1.14"/>
    </reaction>
</comment>
<comment type="subunit">
    <text evidence="1">Tetramer of two alpha and two beta subunits.</text>
</comment>
<comment type="subcellular location">
    <subcellularLocation>
        <location evidence="1">Cytoplasm</location>
    </subcellularLocation>
</comment>
<comment type="similarity">
    <text evidence="1">Belongs to the class-II aminoacyl-tRNA synthetase family.</text>
</comment>
<evidence type="ECO:0000255" key="1">
    <source>
        <dbReference type="HAMAP-Rule" id="MF_00255"/>
    </source>
</evidence>
<feature type="chain" id="PRO_1000197212" description="Glycine--tRNA ligase beta subunit">
    <location>
        <begin position="1"/>
        <end position="721"/>
    </location>
</feature>
<dbReference type="EC" id="6.1.1.14" evidence="1"/>
<dbReference type="EMBL" id="CP001389">
    <property type="protein sequence ID" value="ACP24263.1"/>
    <property type="molecule type" value="Genomic_DNA"/>
</dbReference>
<dbReference type="RefSeq" id="WP_012707048.1">
    <property type="nucleotide sequence ID" value="NC_012587.1"/>
</dbReference>
<dbReference type="RefSeq" id="YP_002825016.1">
    <property type="nucleotide sequence ID" value="NC_012587.1"/>
</dbReference>
<dbReference type="SMR" id="C3MHD5"/>
<dbReference type="STRING" id="394.NGR_c04670"/>
<dbReference type="KEGG" id="rhi:NGR_c04670"/>
<dbReference type="PATRIC" id="fig|394.7.peg.3275"/>
<dbReference type="eggNOG" id="COG0751">
    <property type="taxonomic scope" value="Bacteria"/>
</dbReference>
<dbReference type="HOGENOM" id="CLU_007220_2_1_5"/>
<dbReference type="OrthoDB" id="9775440at2"/>
<dbReference type="Proteomes" id="UP000001054">
    <property type="component" value="Chromosome"/>
</dbReference>
<dbReference type="GO" id="GO:0005829">
    <property type="term" value="C:cytosol"/>
    <property type="evidence" value="ECO:0007669"/>
    <property type="project" value="TreeGrafter"/>
</dbReference>
<dbReference type="GO" id="GO:0004814">
    <property type="term" value="F:arginine-tRNA ligase activity"/>
    <property type="evidence" value="ECO:0007669"/>
    <property type="project" value="InterPro"/>
</dbReference>
<dbReference type="GO" id="GO:0005524">
    <property type="term" value="F:ATP binding"/>
    <property type="evidence" value="ECO:0007669"/>
    <property type="project" value="UniProtKB-UniRule"/>
</dbReference>
<dbReference type="GO" id="GO:0004820">
    <property type="term" value="F:glycine-tRNA ligase activity"/>
    <property type="evidence" value="ECO:0007669"/>
    <property type="project" value="UniProtKB-UniRule"/>
</dbReference>
<dbReference type="GO" id="GO:0006420">
    <property type="term" value="P:arginyl-tRNA aminoacylation"/>
    <property type="evidence" value="ECO:0007669"/>
    <property type="project" value="InterPro"/>
</dbReference>
<dbReference type="GO" id="GO:0006426">
    <property type="term" value="P:glycyl-tRNA aminoacylation"/>
    <property type="evidence" value="ECO:0007669"/>
    <property type="project" value="UniProtKB-UniRule"/>
</dbReference>
<dbReference type="HAMAP" id="MF_00255">
    <property type="entry name" value="Gly_tRNA_synth_beta"/>
    <property type="match status" value="1"/>
</dbReference>
<dbReference type="InterPro" id="IPR008909">
    <property type="entry name" value="DALR_anticod-bd"/>
</dbReference>
<dbReference type="InterPro" id="IPR015944">
    <property type="entry name" value="Gly-tRNA-synth_bsu"/>
</dbReference>
<dbReference type="InterPro" id="IPR006194">
    <property type="entry name" value="Gly-tRNA-synth_heterodimer"/>
</dbReference>
<dbReference type="NCBIfam" id="TIGR00211">
    <property type="entry name" value="glyS"/>
    <property type="match status" value="1"/>
</dbReference>
<dbReference type="PANTHER" id="PTHR30075:SF2">
    <property type="entry name" value="GLYCINE--TRNA LIGASE, CHLOROPLASTIC_MITOCHONDRIAL 2"/>
    <property type="match status" value="1"/>
</dbReference>
<dbReference type="PANTHER" id="PTHR30075">
    <property type="entry name" value="GLYCYL-TRNA SYNTHETASE"/>
    <property type="match status" value="1"/>
</dbReference>
<dbReference type="Pfam" id="PF05746">
    <property type="entry name" value="DALR_1"/>
    <property type="match status" value="1"/>
</dbReference>
<dbReference type="Pfam" id="PF02092">
    <property type="entry name" value="tRNA_synt_2f"/>
    <property type="match status" value="1"/>
</dbReference>
<dbReference type="PRINTS" id="PR01045">
    <property type="entry name" value="TRNASYNTHGB"/>
</dbReference>
<dbReference type="SUPFAM" id="SSF109604">
    <property type="entry name" value="HD-domain/PDEase-like"/>
    <property type="match status" value="1"/>
</dbReference>
<dbReference type="PROSITE" id="PS50861">
    <property type="entry name" value="AA_TRNA_LIGASE_II_GLYAB"/>
    <property type="match status" value="1"/>
</dbReference>
<organism>
    <name type="scientific">Sinorhizobium fredii (strain NBRC 101917 / NGR234)</name>
    <dbReference type="NCBI Taxonomy" id="394"/>
    <lineage>
        <taxon>Bacteria</taxon>
        <taxon>Pseudomonadati</taxon>
        <taxon>Pseudomonadota</taxon>
        <taxon>Alphaproteobacteria</taxon>
        <taxon>Hyphomicrobiales</taxon>
        <taxon>Rhizobiaceae</taxon>
        <taxon>Sinorhizobium/Ensifer group</taxon>
        <taxon>Sinorhizobium</taxon>
    </lineage>
</organism>
<gene>
    <name evidence="1" type="primary">glyS</name>
    <name type="ordered locus">NGR_c04670</name>
</gene>
<protein>
    <recommendedName>
        <fullName evidence="1">Glycine--tRNA ligase beta subunit</fullName>
        <ecNumber evidence="1">6.1.1.14</ecNumber>
    </recommendedName>
    <alternativeName>
        <fullName evidence="1">Glycyl-tRNA synthetase beta subunit</fullName>
        <shortName evidence="1">GlyRS</shortName>
    </alternativeName>
</protein>
<accession>C3MHD5</accession>
<name>SYGB_SINFN</name>
<reference key="1">
    <citation type="journal article" date="2009" name="Appl. Environ. Microbiol.">
        <title>Rhizobium sp. strain NGR234 possesses a remarkable number of secretion systems.</title>
        <authorList>
            <person name="Schmeisser C."/>
            <person name="Liesegang H."/>
            <person name="Krysciak D."/>
            <person name="Bakkou N."/>
            <person name="Le Quere A."/>
            <person name="Wollherr A."/>
            <person name="Heinemeyer I."/>
            <person name="Morgenstern B."/>
            <person name="Pommerening-Roeser A."/>
            <person name="Flores M."/>
            <person name="Palacios R."/>
            <person name="Brenner S."/>
            <person name="Gottschalk G."/>
            <person name="Schmitz R.A."/>
            <person name="Broughton W.J."/>
            <person name="Perret X."/>
            <person name="Strittmatter A.W."/>
            <person name="Streit W.R."/>
        </authorList>
    </citation>
    <scope>NUCLEOTIDE SEQUENCE [LARGE SCALE GENOMIC DNA]</scope>
    <source>
        <strain>NBRC 101917 / NGR234</strain>
    </source>
</reference>